<evidence type="ECO:0000250" key="1">
    <source>
        <dbReference type="UniProtKB" id="Q13291"/>
    </source>
</evidence>
<evidence type="ECO:0000255" key="2"/>
<evidence type="ECO:0000255" key="3">
    <source>
        <dbReference type="PROSITE-ProRule" id="PRU00114"/>
    </source>
</evidence>
<evidence type="ECO:0000256" key="4">
    <source>
        <dbReference type="SAM" id="MobiDB-lite"/>
    </source>
</evidence>
<evidence type="ECO:0000269" key="5">
    <source>
    </source>
</evidence>
<evidence type="ECO:0000269" key="6">
    <source>
    </source>
</evidence>
<evidence type="ECO:0000269" key="7">
    <source>
    </source>
</evidence>
<evidence type="ECO:0000269" key="8">
    <source>
    </source>
</evidence>
<evidence type="ECO:0000269" key="9">
    <source>
    </source>
</evidence>
<evidence type="ECO:0000269" key="10">
    <source>
    </source>
</evidence>
<evidence type="ECO:0000269" key="11">
    <source>
    </source>
</evidence>
<evidence type="ECO:0000269" key="12">
    <source>
    </source>
</evidence>
<evidence type="ECO:0000269" key="13">
    <source>
    </source>
</evidence>
<evidence type="ECO:0000269" key="14">
    <source>
    </source>
</evidence>
<evidence type="ECO:0000269" key="15">
    <source>
    </source>
</evidence>
<evidence type="ECO:0000269" key="16">
    <source>
    </source>
</evidence>
<evidence type="ECO:0000269" key="17">
    <source>
    </source>
</evidence>
<evidence type="ECO:0000269" key="18">
    <source>
    </source>
</evidence>
<evidence type="ECO:0000269" key="19">
    <source>
    </source>
</evidence>
<evidence type="ECO:0000303" key="20">
    <source>
    </source>
</evidence>
<evidence type="ECO:0000305" key="21">
    <source>
    </source>
</evidence>
<name>SLAF1_MOUSE</name>
<proteinExistence type="evidence at protein level"/>
<accession>Q9QUM4</accession>
<accession>Q9QXZ3</accession>
<comment type="function">
    <text evidence="1 5 7 8 9 10 11 12 13 17 18">Self-ligand receptor of the signaling lymphocytic activation molecule (SLAM) family. SLAM receptors triggered by homo- or heterotypic cell-cell interactions are modulating the activation and differentiation of a wide variety of immune cells and thus are involved in the regulation and interconnection of both innate and adaptive immune response. Activities are controlled by presence or absence of small cytoplasmic adapter proteins, SH2D1A/SAP and/or SH2D1B/EAT-2. SLAMF1-induced signal-transduction events in T-lymphocytes are different from those in B-cells. Two modes of SLAMF1 signaling seem to exist: one depending on SH2D1A (and perhaps SH2D1B) and another in which protein-tyrosine phosphatase 2C (PTPN11)-dependent signal transduction operates. Initially it has been proposed that association with SH2D1A prevents binding to inhibitory effectors including INPP5D/SHIP1 and PTPN11/SHP-2 (By similarity). However, signaling is also regulated by SH2D1A which can simultaneously interact with and recruit FYN which subsequently phosphorylates and activates SLAMF1 (By similarity). Mediates IL-2-independent proliferation of activated T-cells during immune responses and induces IFN-gamma production (PubMed:12351401, PubMed:9126961). Downstreaming signaling involves INPP5D, DOK1 and DOK2 leading to inhibited IFN-gamma production in T-cells, and PRKCQ, BCL10 and NFKB1 leading to increased T-cell activation and Th2 cytokine production (PubMed:11477403, PubMed:15539155, PubMed:16847311). Promotes T-cell receptor-induced IL-4 secretion by CD4(+) cells (PubMed:15123745). Inhibits antigen receptor-mediated production of IFN-gamma, but not IL-2, in CD4(-)/CD8(-) T-cells (PubMed:11477403). Required for IL-4 production by germinal centers T follicular helper (T(Fh))cells (PubMed:20525889). May inhibit CD40-induced signal transduction in monocyte-derived dendritic cells (By similarity). May play a role in allergic responses and may regulate allergen-induced Th2 cytokine and Th1 cytokine secretion (PubMed:16528012). In conjunction with SLAMF6 controls the transition between positive selection and the subsequent expansion and differentiation of the thymocytic natural killer T (NKT) cell lineage (PubMed:18031695). Involved in the peripheral differentiation of indifferent natural killer T (iNKT) cells toward a regulatory NKT2 type (PubMed:18606638). In macrophages involved in down-regulation of IL-12, TNF-alpha and nitric oxide in response to lipopolysaccharide (LPS) (PubMed:15123745). In B-cells activates the ERK signaling pathway independently of SH2D1A but implicating both, SYK and INPP5D, and activates Akt signaling dependent on SYK and SH2D1A (PubMed:15315965). In conjunction with CD84/SLAMF5 and SLAMF6 may be a negative regulator of the humoral immune response (PubMed:25926831).</text>
</comment>
<comment type="function">
    <text evidence="15 21">(Microbial infection) Involved in innate immune response against Gram-negative bacteria in macrophages; probably recognizes OmpC and/or OmpF on the bacterial surface, regulates phagosome maturation and recruitment of the PI3K complex II (PI3KC3-C2) leading to accumulated of PdtIns(3)P and NOX2 activity in the phagosomes (PubMed:20818396, PubMed:22493499).</text>
</comment>
<comment type="subunit">
    <text evidence="1 5 6 11 14 16 19">Interacts (via cytoplasmic domain) with SH2D1A and SH2D1B; SH2D1A mediates association with FYN; SH2D1A binds to phosphorylated and not phosphorylated ITSM 1 (PubMed:11477403, PubMed:16847311, PubMed:9774102). Interacts (via cytoplasmic domain phosphorylated on tyrosine residues) with INPP5D and PTPN11; presence of SH2D1A facilitates binding to INPP5D (By similarity). Interacts with MAP4K1 (By similarity). Interacts with PIK3C3, BECN1 and UVRAG; indicative for an association with PI3K complex II (PI3KC3-C2) (PubMed:22493499).</text>
</comment>
<comment type="interaction">
    <interactant intactId="EBI-7910086">
        <id>Q9QUM4</id>
    </interactant>
    <interactant intactId="EBI-524514">
        <id>P39688</id>
        <label>Fyn</label>
    </interactant>
    <organismsDiffer>false</organismsDiffer>
    <experiments>4</experiments>
</comment>
<comment type="interaction">
    <interactant intactId="EBI-7910086">
        <id>Q9QUM4</id>
    </interactant>
    <interactant intactId="EBI-7910438">
        <id>O88890</id>
        <label>Sh2d1a</label>
    </interactant>
    <organismsDiffer>false</organismsDiffer>
    <experiments>3</experiments>
</comment>
<comment type="interaction">
    <interactant intactId="EBI-7910086">
        <id>Q9QUM4</id>
    </interactant>
    <interactant intactId="EBI-949378">
        <id>Q14457</id>
        <label>BECN1</label>
    </interactant>
    <organismsDiffer>true</organismsDiffer>
    <experiments>8</experiments>
</comment>
<comment type="interaction">
    <interactant intactId="EBI-7910086">
        <id>Q9QUM4</id>
    </interactant>
    <interactant intactId="EBI-2952704">
        <id>Q9P2Y5</id>
        <label>UVRAG</label>
    </interactant>
    <organismsDiffer>true</organismsDiffer>
    <experiments>6</experiments>
</comment>
<comment type="subcellular location">
    <subcellularLocation>
        <location evidence="1">Cell membrane</location>
        <topology>Single-pass type I membrane protein</topology>
    </subcellularLocation>
    <text evidence="1">Present on the surface of B-cells and T-cells. Located at the plasma membrane contacts between neighboring T cells.</text>
</comment>
<comment type="alternative products">
    <event type="alternative splicing"/>
    <isoform>
        <id>Q9QUM4-1</id>
        <name>Long</name>
        <sequence type="displayed"/>
    </isoform>
    <isoform>
        <id>Q9QUM4-2</id>
        <name>Short</name>
        <sequence type="described" ref="VSP_002570"/>
    </isoform>
</comment>
<comment type="domain">
    <text evidence="1">The ITSMs (immunoreceptor tyrosine-based switch motifs) with the consensus sequence T-X-Y-X-X-[VI] present in SLAM family receptors have overlapping specificity for activating and inhibitory SH2 domain-containing binding partners. Especially they mediate the interaction with the SH2 domain of SH2D1A and SH2D1B. For SLAMF1 a 'two-out-of-three-pronged' mechanism is proposed involving threonine (position -2), phosphorylated tyrosine (position 0) and valine/isoleucine (position +3). Binding is mediated by either three 'prongs' (for high affinity binding involving ITSM 1) or a combination of any two also including non-phosphorylated Tyr-288 of ITSM 1 thus providing a positive feedback loop implicating SH2D1A-dependent recruitment of activating FYN. ITSM 2 needs to be phosphorylated on Tyr-335 for SH2D1A binding.</text>
</comment>
<comment type="PTM">
    <text evidence="1 5">Phosphorylated on tyrosine residues by FYN (By similarity).</text>
</comment>
<protein>
    <recommendedName>
        <fullName>Signaling lymphocytic activation molecule</fullName>
    </recommendedName>
    <alternativeName>
        <fullName>SLAM family member 1</fullName>
    </alternativeName>
    <cdAntigenName>CD150</cdAntigenName>
</protein>
<sequence>MDPKGSLSWRILLFLSLAFELSYGTGGGVMDCPVILQKLGQDTWLPLTNEHQINKSVNKSVRILVTMATSPGSKSNKKIVSFDLSKGSYPDHLEDGYHFQSKNLSLKILGNRRESEGWYLVSVEENVSVQQFCKQLKLYEQVSPPEIKVLNKTQENENGTCSLLLACTVKKGDHVTYSWSDEAGTHLLSRANRSHLLHITLSNQHQDSIYNCTASNPVSSISRTFNLSSQACKQESSSESSPWMQYTLVPLGVVIIFILVFTAIIMMKRQGKSNHCQPPVEEKSLTIYAQVQKSGPQEKKLHDALTDQDPCTTIYVAATEPAPESVQEPNPTTVYASVTLPES</sequence>
<dbReference type="EMBL" id="AF149791">
    <property type="protein sequence ID" value="AAF22231.1"/>
    <property type="molecule type" value="mRNA"/>
</dbReference>
<dbReference type="EMBL" id="AF149792">
    <property type="protein sequence ID" value="AAF22232.1"/>
    <property type="molecule type" value="mRNA"/>
</dbReference>
<dbReference type="EMBL" id="AF164523">
    <property type="protein sequence ID" value="AAF13818.1"/>
    <property type="molecule type" value="Genomic_DNA"/>
</dbReference>
<dbReference type="EMBL" id="AF164519">
    <property type="protein sequence ID" value="AAF13818.1"/>
    <property type="status" value="JOINED"/>
    <property type="molecule type" value="Genomic_DNA"/>
</dbReference>
<dbReference type="EMBL" id="AF164520">
    <property type="protein sequence ID" value="AAF13818.1"/>
    <property type="status" value="JOINED"/>
    <property type="molecule type" value="Genomic_DNA"/>
</dbReference>
<dbReference type="EMBL" id="AF164521">
    <property type="protein sequence ID" value="AAF13818.1"/>
    <property type="status" value="JOINED"/>
    <property type="molecule type" value="Genomic_DNA"/>
</dbReference>
<dbReference type="EMBL" id="AF164522">
    <property type="protein sequence ID" value="AAF13818.1"/>
    <property type="status" value="JOINED"/>
    <property type="molecule type" value="Genomic_DNA"/>
</dbReference>
<dbReference type="EMBL" id="AF160990">
    <property type="protein sequence ID" value="AAF14535.1"/>
    <property type="molecule type" value="mRNA"/>
</dbReference>
<dbReference type="CCDS" id="CCDS15502.1">
    <molecule id="Q9QUM4-1"/>
</dbReference>
<dbReference type="RefSeq" id="NP_038758.2">
    <molecule id="Q9QUM4-1"/>
    <property type="nucleotide sequence ID" value="NM_013730.4"/>
</dbReference>
<dbReference type="SMR" id="Q9QUM4"/>
<dbReference type="BioGRID" id="205139">
    <property type="interactions" value="2"/>
</dbReference>
<dbReference type="CORUM" id="Q9QUM4"/>
<dbReference type="FunCoup" id="Q9QUM4">
    <property type="interactions" value="184"/>
</dbReference>
<dbReference type="IntAct" id="Q9QUM4">
    <property type="interactions" value="11"/>
</dbReference>
<dbReference type="MINT" id="Q9QUM4"/>
<dbReference type="STRING" id="10090.ENSMUSP00000015460"/>
<dbReference type="GlyCosmos" id="Q9QUM4">
    <property type="glycosylation" value="9 sites, No reported glycans"/>
</dbReference>
<dbReference type="GlyGen" id="Q9QUM4">
    <property type="glycosylation" value="10 sites, 1 O-linked glycan (1 site)"/>
</dbReference>
<dbReference type="iPTMnet" id="Q9QUM4"/>
<dbReference type="PhosphoSitePlus" id="Q9QUM4"/>
<dbReference type="jPOST" id="Q9QUM4"/>
<dbReference type="PaxDb" id="10090-ENSMUSP00000015460"/>
<dbReference type="ProteomicsDB" id="261407">
    <molecule id="Q9QUM4-1"/>
</dbReference>
<dbReference type="ProteomicsDB" id="261408">
    <molecule id="Q9QUM4-2"/>
</dbReference>
<dbReference type="Antibodypedia" id="3725">
    <property type="antibodies" value="993 antibodies from 47 providers"/>
</dbReference>
<dbReference type="DNASU" id="27218"/>
<dbReference type="Ensembl" id="ENSMUST00000015460.5">
    <molecule id="Q9QUM4-1"/>
    <property type="protein sequence ID" value="ENSMUSP00000015460.5"/>
    <property type="gene ID" value="ENSMUSG00000015316.12"/>
</dbReference>
<dbReference type="GeneID" id="27218"/>
<dbReference type="KEGG" id="mmu:27218"/>
<dbReference type="UCSC" id="uc007dpc.1">
    <molecule id="Q9QUM4-1"/>
    <property type="organism name" value="mouse"/>
</dbReference>
<dbReference type="AGR" id="MGI:1351314"/>
<dbReference type="CTD" id="6504"/>
<dbReference type="MGI" id="MGI:1351314">
    <property type="gene designation" value="Slamf1"/>
</dbReference>
<dbReference type="VEuPathDB" id="HostDB:ENSMUSG00000015316"/>
<dbReference type="eggNOG" id="ENOG502SVMG">
    <property type="taxonomic scope" value="Eukaryota"/>
</dbReference>
<dbReference type="GeneTree" id="ENSGT01030000234540"/>
<dbReference type="HOGENOM" id="CLU_066453_0_0_1"/>
<dbReference type="InParanoid" id="Q9QUM4"/>
<dbReference type="OMA" id="DHVAYNW"/>
<dbReference type="OrthoDB" id="9835793at2759"/>
<dbReference type="PhylomeDB" id="Q9QUM4"/>
<dbReference type="TreeFam" id="TF334964"/>
<dbReference type="BioGRID-ORCS" id="27218">
    <property type="hits" value="3 hits in 77 CRISPR screens"/>
</dbReference>
<dbReference type="PRO" id="PR:Q9QUM4"/>
<dbReference type="Proteomes" id="UP000000589">
    <property type="component" value="Chromosome 1"/>
</dbReference>
<dbReference type="RNAct" id="Q9QUM4">
    <property type="molecule type" value="protein"/>
</dbReference>
<dbReference type="Bgee" id="ENSMUSG00000015316">
    <property type="expression patterns" value="Expressed in blood and 36 other cell types or tissues"/>
</dbReference>
<dbReference type="ExpressionAtlas" id="Q9QUM4">
    <property type="expression patterns" value="baseline and differential"/>
</dbReference>
<dbReference type="GO" id="GO:0009986">
    <property type="term" value="C:cell surface"/>
    <property type="evidence" value="ECO:0000314"/>
    <property type="project" value="MGI"/>
</dbReference>
<dbReference type="GO" id="GO:0009897">
    <property type="term" value="C:external side of plasma membrane"/>
    <property type="evidence" value="ECO:0000314"/>
    <property type="project" value="MGI"/>
</dbReference>
<dbReference type="GO" id="GO:0045335">
    <property type="term" value="C:phagocytic vesicle"/>
    <property type="evidence" value="ECO:0000314"/>
    <property type="project" value="MGI"/>
</dbReference>
<dbReference type="GO" id="GO:0042802">
    <property type="term" value="F:identical protein binding"/>
    <property type="evidence" value="ECO:0000314"/>
    <property type="project" value="MGI"/>
</dbReference>
<dbReference type="GO" id="GO:0042169">
    <property type="term" value="F:SH2 domain binding"/>
    <property type="evidence" value="ECO:0007669"/>
    <property type="project" value="Ensembl"/>
</dbReference>
<dbReference type="GO" id="GO:0038023">
    <property type="term" value="F:signaling receptor activity"/>
    <property type="evidence" value="ECO:0000314"/>
    <property type="project" value="MGI"/>
</dbReference>
<dbReference type="GO" id="GO:0001618">
    <property type="term" value="F:virus receptor activity"/>
    <property type="evidence" value="ECO:0007669"/>
    <property type="project" value="Ensembl"/>
</dbReference>
<dbReference type="GO" id="GO:0002250">
    <property type="term" value="P:adaptive immune response"/>
    <property type="evidence" value="ECO:0007669"/>
    <property type="project" value="UniProtKB-KW"/>
</dbReference>
<dbReference type="GO" id="GO:0007155">
    <property type="term" value="P:cell adhesion"/>
    <property type="evidence" value="ECO:0007669"/>
    <property type="project" value="UniProtKB-KW"/>
</dbReference>
<dbReference type="GO" id="GO:0045087">
    <property type="term" value="P:innate immune response"/>
    <property type="evidence" value="ECO:0007669"/>
    <property type="project" value="UniProtKB-KW"/>
</dbReference>
<dbReference type="GO" id="GO:0002232">
    <property type="term" value="P:leukocyte chemotaxis involved in inflammatory response"/>
    <property type="evidence" value="ECO:0000315"/>
    <property type="project" value="MGI"/>
</dbReference>
<dbReference type="GO" id="GO:0002277">
    <property type="term" value="P:myeloid dendritic cell activation involved in immune response"/>
    <property type="evidence" value="ECO:0007669"/>
    <property type="project" value="Ensembl"/>
</dbReference>
<dbReference type="GO" id="GO:0001779">
    <property type="term" value="P:natural killer cell differentiation"/>
    <property type="evidence" value="ECO:0000315"/>
    <property type="project" value="UniProtKB"/>
</dbReference>
<dbReference type="GO" id="GO:0001787">
    <property type="term" value="P:natural killer cell proliferation"/>
    <property type="evidence" value="ECO:0000315"/>
    <property type="project" value="UniProtKB"/>
</dbReference>
<dbReference type="GO" id="GO:2000349">
    <property type="term" value="P:negative regulation of CD40 signaling pathway"/>
    <property type="evidence" value="ECO:0007669"/>
    <property type="project" value="Ensembl"/>
</dbReference>
<dbReference type="GO" id="GO:0032695">
    <property type="term" value="P:negative regulation of interleukin-12 production"/>
    <property type="evidence" value="ECO:0007669"/>
    <property type="project" value="Ensembl"/>
</dbReference>
<dbReference type="GO" id="GO:0032715">
    <property type="term" value="P:negative regulation of interleukin-6 production"/>
    <property type="evidence" value="ECO:0007669"/>
    <property type="project" value="Ensembl"/>
</dbReference>
<dbReference type="GO" id="GO:0002725">
    <property type="term" value="P:negative regulation of T cell cytokine production"/>
    <property type="evidence" value="ECO:0000314"/>
    <property type="project" value="UniProtKB"/>
</dbReference>
<dbReference type="GO" id="GO:0032720">
    <property type="term" value="P:negative regulation of tumor necrosis factor production"/>
    <property type="evidence" value="ECO:0007669"/>
    <property type="project" value="Ensembl"/>
</dbReference>
<dbReference type="GO" id="GO:0032689">
    <property type="term" value="P:negative regulation of type II interferon production"/>
    <property type="evidence" value="ECO:0000314"/>
    <property type="project" value="UniProtKB"/>
</dbReference>
<dbReference type="GO" id="GO:0006909">
    <property type="term" value="P:phagocytosis"/>
    <property type="evidence" value="ECO:0007669"/>
    <property type="project" value="UniProtKB-KW"/>
</dbReference>
<dbReference type="GO" id="GO:0042104">
    <property type="term" value="P:positive regulation of activated T cell proliferation"/>
    <property type="evidence" value="ECO:0000314"/>
    <property type="project" value="UniProtKB"/>
</dbReference>
<dbReference type="GO" id="GO:2000510">
    <property type="term" value="P:positive regulation of dendritic cell chemotaxis"/>
    <property type="evidence" value="ECO:0000315"/>
    <property type="project" value="MGI"/>
</dbReference>
<dbReference type="GO" id="GO:0070374">
    <property type="term" value="P:positive regulation of ERK1 and ERK2 cascade"/>
    <property type="evidence" value="ECO:0007669"/>
    <property type="project" value="Ensembl"/>
</dbReference>
<dbReference type="GO" id="GO:0046330">
    <property type="term" value="P:positive regulation of JNK cascade"/>
    <property type="evidence" value="ECO:0007669"/>
    <property type="project" value="Ensembl"/>
</dbReference>
<dbReference type="GO" id="GO:0010759">
    <property type="term" value="P:positive regulation of macrophage chemotaxis"/>
    <property type="evidence" value="ECO:0000315"/>
    <property type="project" value="MGI"/>
</dbReference>
<dbReference type="GO" id="GO:2000556">
    <property type="term" value="P:positive regulation of T-helper 1 cell cytokine production"/>
    <property type="evidence" value="ECO:0000314"/>
    <property type="project" value="UniProtKB"/>
</dbReference>
<dbReference type="GO" id="GO:0032729">
    <property type="term" value="P:positive regulation of type II interferon production"/>
    <property type="evidence" value="ECO:0000314"/>
    <property type="project" value="UniProtKB"/>
</dbReference>
<dbReference type="GO" id="GO:0031338">
    <property type="term" value="P:regulation of vesicle fusion"/>
    <property type="evidence" value="ECO:0000315"/>
    <property type="project" value="MGI"/>
</dbReference>
<dbReference type="FunFam" id="2.60.40.10:FF:001487">
    <property type="entry name" value="Signaling lymphocytic activation molecule"/>
    <property type="match status" value="1"/>
</dbReference>
<dbReference type="Gene3D" id="2.60.40.10">
    <property type="entry name" value="Immunoglobulins"/>
    <property type="match status" value="2"/>
</dbReference>
<dbReference type="InterPro" id="IPR015631">
    <property type="entry name" value="CD2/SLAM_rcpt"/>
</dbReference>
<dbReference type="InterPro" id="IPR007110">
    <property type="entry name" value="Ig-like_dom"/>
</dbReference>
<dbReference type="InterPro" id="IPR036179">
    <property type="entry name" value="Ig-like_dom_sf"/>
</dbReference>
<dbReference type="InterPro" id="IPR013783">
    <property type="entry name" value="Ig-like_fold"/>
</dbReference>
<dbReference type="InterPro" id="IPR010407">
    <property type="entry name" value="Sig_lymph_act_molc_N"/>
</dbReference>
<dbReference type="PANTHER" id="PTHR12080">
    <property type="entry name" value="SIGNALING LYMPHOCYTIC ACTIVATION MOLECULE"/>
    <property type="match status" value="1"/>
</dbReference>
<dbReference type="PANTHER" id="PTHR12080:SF49">
    <property type="entry name" value="SIGNALING LYMPHOCYTIC ACTIVATION MOLECULE"/>
    <property type="match status" value="1"/>
</dbReference>
<dbReference type="Pfam" id="PF06214">
    <property type="entry name" value="SLAM"/>
    <property type="match status" value="1"/>
</dbReference>
<dbReference type="SUPFAM" id="SSF48726">
    <property type="entry name" value="Immunoglobulin"/>
    <property type="match status" value="1"/>
</dbReference>
<dbReference type="PROSITE" id="PS50835">
    <property type="entry name" value="IG_LIKE"/>
    <property type="match status" value="1"/>
</dbReference>
<gene>
    <name type="primary">Slamf1</name>
    <name type="synonym">Slam</name>
</gene>
<keyword id="KW-1064">Adaptive immunity</keyword>
<keyword id="KW-0025">Alternative splicing</keyword>
<keyword id="KW-0130">Cell adhesion</keyword>
<keyword id="KW-1003">Cell membrane</keyword>
<keyword id="KW-1015">Disulfide bond</keyword>
<keyword id="KW-0325">Glycoprotein</keyword>
<keyword id="KW-0391">Immunity</keyword>
<keyword id="KW-0393">Immunoglobulin domain</keyword>
<keyword id="KW-0399">Innate immunity</keyword>
<keyword id="KW-0472">Membrane</keyword>
<keyword id="KW-0581">Phagocytosis</keyword>
<keyword id="KW-0597">Phosphoprotein</keyword>
<keyword id="KW-0675">Receptor</keyword>
<keyword id="KW-1185">Reference proteome</keyword>
<keyword id="KW-0677">Repeat</keyword>
<keyword id="KW-0732">Signal</keyword>
<keyword id="KW-0812">Transmembrane</keyword>
<keyword id="KW-1133">Transmembrane helix</keyword>
<feature type="signal peptide" evidence="2">
    <location>
        <begin position="1"/>
        <end position="24"/>
    </location>
</feature>
<feature type="chain" id="PRO_0000014960" description="Signaling lymphocytic activation molecule">
    <location>
        <begin position="25"/>
        <end position="343"/>
    </location>
</feature>
<feature type="topological domain" description="Extracellular" evidence="2">
    <location>
        <begin position="25"/>
        <end position="242"/>
    </location>
</feature>
<feature type="transmembrane region" description="Helical" evidence="2">
    <location>
        <begin position="243"/>
        <end position="265"/>
    </location>
</feature>
<feature type="topological domain" description="Cytoplasmic" evidence="2">
    <location>
        <begin position="266"/>
        <end position="343"/>
    </location>
</feature>
<feature type="domain" description="Ig-like V-type">
    <location>
        <begin position="29"/>
        <end position="138"/>
    </location>
</feature>
<feature type="domain" description="Ig-like C2-type">
    <location>
        <begin position="145"/>
        <end position="228"/>
    </location>
</feature>
<feature type="region of interest" description="Disordered" evidence="4">
    <location>
        <begin position="320"/>
        <end position="343"/>
    </location>
</feature>
<feature type="short sequence motif" description="ITSM 1" evidence="1">
    <location>
        <begin position="286"/>
        <end position="291"/>
    </location>
</feature>
<feature type="short sequence motif" description="SH2-binding" evidence="2">
    <location>
        <begin position="313"/>
        <end position="318"/>
    </location>
</feature>
<feature type="short sequence motif" description="ITSM 2" evidence="1">
    <location>
        <begin position="333"/>
        <end position="338"/>
    </location>
</feature>
<feature type="compositionally biased region" description="Polar residues" evidence="4">
    <location>
        <begin position="327"/>
        <end position="343"/>
    </location>
</feature>
<feature type="modified residue" description="Phosphotyrosine; by FYN" evidence="1">
    <location>
        <position position="288"/>
    </location>
</feature>
<feature type="modified residue" description="Phosphotyrosine; by FYN" evidence="1">
    <location>
        <position position="315"/>
    </location>
</feature>
<feature type="modified residue" description="Phosphotyrosine; by FYN" evidence="1">
    <location>
        <position position="335"/>
    </location>
</feature>
<feature type="glycosylation site" description="N-linked (GlcNAc...) asparagine" evidence="2">
    <location>
        <position position="54"/>
    </location>
</feature>
<feature type="glycosylation site" description="N-linked (GlcNAc...) asparagine" evidence="2">
    <location>
        <position position="58"/>
    </location>
</feature>
<feature type="glycosylation site" description="N-linked (GlcNAc...) asparagine" evidence="2">
    <location>
        <position position="103"/>
    </location>
</feature>
<feature type="glycosylation site" description="N-linked (GlcNAc...) asparagine" evidence="2">
    <location>
        <position position="126"/>
    </location>
</feature>
<feature type="glycosylation site" description="N-linked (GlcNAc...) asparagine" evidence="2">
    <location>
        <position position="151"/>
    </location>
</feature>
<feature type="glycosylation site" description="N-linked (GlcNAc...) asparagine" evidence="2">
    <location>
        <position position="158"/>
    </location>
</feature>
<feature type="glycosylation site" description="N-linked (GlcNAc...) asparagine" evidence="2">
    <location>
        <position position="192"/>
    </location>
</feature>
<feature type="glycosylation site" description="N-linked (GlcNAc...) asparagine" evidence="2">
    <location>
        <position position="211"/>
    </location>
</feature>
<feature type="glycosylation site" description="N-linked (GlcNAc...) asparagine" evidence="2">
    <location>
        <position position="226"/>
    </location>
</feature>
<feature type="disulfide bond" evidence="3">
    <location>
        <begin position="161"/>
        <end position="232"/>
    </location>
</feature>
<feature type="disulfide bond" evidence="3">
    <location>
        <begin position="167"/>
        <end position="212"/>
    </location>
</feature>
<feature type="splice variant" id="VSP_002570" description="In isoform Short." evidence="20">
    <original>PQEKKLHDALTDQDPCTTIYVAATEPAPESVQEPNPTTVYASVTLPES</original>
    <variation>VRSMPHLAGVSVIFRTGFLIAALHTTMVLQGLLE</variation>
    <location>
        <begin position="296"/>
        <end position="343"/>
    </location>
</feature>
<feature type="mutagenesis site" description="Greatly reduces SLAMF1:SH2D1A-mediated intracellular tyrosine phosphorylation." evidence="5">
    <original>Y</original>
    <variation>A</variation>
    <location>
        <position position="288"/>
    </location>
</feature>
<feature type="mutagenesis site" description="Abolishes SLAMF1:SH2D1A-mediated intracellular tyrosine phosphorylation, no effect on interaction with SH2D1A; when associated with A-335." evidence="5">
    <original>Y</original>
    <variation>A</variation>
    <location>
        <position position="315"/>
    </location>
</feature>
<feature type="mutagenesis site" description="Abolishes SLAMF1:SH2D1A-mediated intracellular tyrosine phosphorylation, no effect on interaction with SH2D1A; when associated with A-315." evidence="5">
    <original>Y</original>
    <variation>A</variation>
    <location>
        <position position="335"/>
    </location>
</feature>
<reference key="1">
    <citation type="journal article" date="1999" name="J. Immunol.">
        <title>Molecular and functional characterization of mouse signaling lymphocytic activation molecule (SLAM): differential expression and responsiveness in Th1 and Th2 cells.</title>
        <authorList>
            <person name="Castro A.G."/>
            <person name="Hauser T.M."/>
            <person name="Cocks B.G."/>
            <person name="Abrams J."/>
            <person name="Zurawski S."/>
            <person name="Churakova T."/>
            <person name="Zonin F."/>
            <person name="Robinson D."/>
            <person name="Tangye S.G."/>
            <person name="Aversa G."/>
            <person name="Nichols K.E."/>
            <person name="de Vries J.E."/>
            <person name="Lanier L.L."/>
            <person name="O'Garra A."/>
        </authorList>
    </citation>
    <scope>NUCLEOTIDE SEQUENCE [MRNA] (ISOFORMS LONG AND SHORT)</scope>
    <source>
        <strain>BALB/cJ</strain>
    </source>
</reference>
<reference key="2">
    <citation type="journal article" date="2004" name="J. Exp. Med.">
        <title>The cell surface receptor SLAM controls T cell and macrophage functions.</title>
        <authorList>
            <person name="Wang N."/>
            <person name="Satoskar A."/>
            <person name="Faubion W."/>
            <person name="Howie D."/>
            <person name="Okamoto S."/>
            <person name="Feske S."/>
            <person name="Gullo C."/>
            <person name="Clarke K."/>
            <person name="Sosa M.R."/>
            <person name="Sharpe A.H."/>
            <person name="Terhorst C."/>
        </authorList>
    </citation>
    <scope>NUCLEOTIDE SEQUENCE [GENOMIC DNA] (ISOFORM LONG)</scope>
    <scope>FUNCTION</scope>
</reference>
<reference key="3">
    <citation type="submission" date="1999-06" db="EMBL/GenBank/DDBJ databases">
        <title>Genomic organization of murine Slam.</title>
        <authorList>
            <person name="Wu C."/>
            <person name="Wang N."/>
            <person name="Sayos J."/>
            <person name="Terhorst C."/>
        </authorList>
    </citation>
    <scope>NUCLEOTIDE SEQUENCE [MRNA] (ISOFORM LONG)</scope>
</reference>
<reference key="4">
    <citation type="journal article" date="1997" name="J. Immunol.">
        <title>Engagement of the signaling lymphocytic activation molecule (SLAM) on activated T cells results in IL-2-independent, cyclosporin A-sensitive T cell proliferation and IFN-gamma production.</title>
        <authorList>
            <person name="Aversa G."/>
            <person name="Chang C.C."/>
            <person name="Carballido J.M."/>
            <person name="Cocks B.G."/>
            <person name="de Vries J.E."/>
        </authorList>
    </citation>
    <scope>FUNCTION</scope>
</reference>
<reference key="5">
    <citation type="journal article" date="1998" name="Nature">
        <title>The X-linked lymphoproliferative-disease gene product SAP regulates signals induced through the co-receptor SLAM.</title>
        <authorList>
            <person name="Sayos J."/>
            <person name="Wu C."/>
            <person name="Morra M."/>
            <person name="Wang N."/>
            <person name="Zhang X."/>
            <person name="Allen D."/>
            <person name="van Schaik S."/>
            <person name="Notarangelo L."/>
            <person name="Geha R."/>
            <person name="Roncarolo M.G."/>
            <person name="Oettgen H."/>
            <person name="de Vries J.E."/>
            <person name="Aversa G."/>
            <person name="Terhorst C."/>
        </authorList>
    </citation>
    <scope>INTERACTION WITH SH2D1A</scope>
</reference>
<reference key="6">
    <citation type="journal article" date="2001" name="EMBO J.">
        <title>Structural basis for the interaction of the free SH2 domain EAT-2 with SLAM receptors in hematopoietic cells.</title>
        <authorList>
            <person name="Morra M."/>
            <person name="Lu J."/>
            <person name="Poy F."/>
            <person name="Martin M."/>
            <person name="Sayos J."/>
            <person name="Calpe S."/>
            <person name="Gullo C."/>
            <person name="Howie D."/>
            <person name="Rietdijk S."/>
            <person name="Thompson A."/>
            <person name="Coyle A.J."/>
            <person name="Denny C."/>
            <person name="Yaffe M.B."/>
            <person name="Engel P."/>
            <person name="Eck M.J."/>
            <person name="Terhorst C."/>
        </authorList>
    </citation>
    <scope>INTERACTION WITH SH2D1B</scope>
</reference>
<reference key="7">
    <citation type="journal article" date="2001" name="Nat. Immunol.">
        <title>Regulation of SLAM-mediated signal transduction by SAP, the X-linked lymphoproliferative gene product.</title>
        <authorList>
            <person name="Latour S."/>
            <person name="Gish G."/>
            <person name="Helgason C.D."/>
            <person name="Humphries R.K."/>
            <person name="Pawson T."/>
            <person name="Veillette A."/>
        </authorList>
    </citation>
    <scope>FUNCTION</scope>
    <scope>PHOSPHORYLATION</scope>
    <scope>INTERACTION WITH SH2D1A AND FYN</scope>
    <scope>MUTAGENESIS OF TYR-288; TYR-315 AND TYR-335</scope>
</reference>
<reference key="8">
    <citation type="journal article" date="2002" name="Blood">
        <title>The role of SAP in murine CD150 (SLAM)-mediated T-cell proliferation and interferon gamma production.</title>
        <authorList>
            <person name="Howie D."/>
            <person name="Okamoto S."/>
            <person name="Rietdijk S."/>
            <person name="Clarke K."/>
            <person name="Wang N."/>
            <person name="Gullo C."/>
            <person name="Bruggeman J.P."/>
            <person name="Manning S."/>
            <person name="Coyle A.J."/>
            <person name="Greenfield E."/>
            <person name="Kuchroo V."/>
            <person name="Terhorst C."/>
        </authorList>
    </citation>
    <scope>FUNCTION</scope>
</reference>
<reference key="9">
    <citation type="journal article" date="2004" name="Blood">
        <title>The adaptor protein SH2D1A regulates signaling through CD150 (SLAM) in B cells.</title>
        <authorList>
            <person name="Mikhalap S.V."/>
            <person name="Shlapatska L.M."/>
            <person name="Yurchenko O.V."/>
            <person name="Yurchenko M.Y."/>
            <person name="Berdova G.G."/>
            <person name="Nichols K.E."/>
            <person name="Clark E.A."/>
            <person name="Sidorenko S.P."/>
        </authorList>
    </citation>
    <scope>FUNCTION</scope>
</reference>
<reference key="10">
    <citation type="journal article" date="2004" name="Immunity">
        <title>SAP regulates T(H)2 differentiation and PKC-theta-mediated activation of NF-kappaB1.</title>
        <authorList>
            <person name="Cannons J.L."/>
            <person name="Yu L.J."/>
            <person name="Hill B."/>
            <person name="Mijares L.A."/>
            <person name="Dombroski D."/>
            <person name="Nichols K.E."/>
            <person name="Antonellis A."/>
            <person name="Koretzky G.A."/>
            <person name="Gardner K."/>
            <person name="Schwartzberg P.L."/>
        </authorList>
    </citation>
    <scope>FUNCTION</scope>
</reference>
<reference key="11">
    <citation type="journal article" date="2006" name="Am. J. Respir. Cell Mol. Biol.">
        <title>The costimulatory molecule SLAM is critical for pulmonary allergic responses.</title>
        <authorList>
            <person name="Wang N."/>
            <person name="Campo M."/>
            <person name="Ting L."/>
            <person name="Fleming C."/>
            <person name="Terhorst C."/>
            <person name="Finn P.W."/>
        </authorList>
    </citation>
    <scope>FUNCTION</scope>
</reference>
<reference key="12">
    <citation type="journal article" date="2006" name="Mol. Cell. Biol.">
        <title>Association between SAP and FynT: Inducible SH3 domain-mediated interaction controlled by engagement of the SLAM receptor.</title>
        <authorList>
            <person name="Chen R."/>
            <person name="Latour S."/>
            <person name="Shi X."/>
            <person name="Veillette A."/>
        </authorList>
    </citation>
    <scope>INTERACTION WITH SH2D1A AND FYN</scope>
</reference>
<reference key="13">
    <citation type="journal article" date="2007" name="Immunity">
        <title>Homotypic interactions mediated by Slamf1 and Slamf6 receptors control NKT cell lineage development.</title>
        <authorList>
            <person name="Griewank K."/>
            <person name="Borowski C."/>
            <person name="Rietdijk S."/>
            <person name="Wang N."/>
            <person name="Julien A."/>
            <person name="Wei D.G."/>
            <person name="Mamchak A.A."/>
            <person name="Terhorst C."/>
            <person name="Bendelac A."/>
        </authorList>
    </citation>
    <scope>FUNCTION</scope>
</reference>
<reference key="14">
    <citation type="journal article" date="2008" name="J. Immunol.">
        <title>Impaired SLAM-SLAM homotypic interaction between invariant NKT cells and dendritic cells affects differentiation of IL-4/IL-10-secreting NKT2 cells in nonobese diabetic mice.</title>
        <authorList>
            <person name="Baev D.V."/>
            <person name="Caielli S."/>
            <person name="Ronchi F."/>
            <person name="Coccia M."/>
            <person name="Facciotti F."/>
            <person name="Nichols K.E."/>
            <person name="Falcone M."/>
        </authorList>
    </citation>
    <scope>FUNCTION</scope>
</reference>
<reference key="15">
    <citation type="journal article" date="2010" name="Cell">
        <title>A tissue-specific atlas of mouse protein phosphorylation and expression.</title>
        <authorList>
            <person name="Huttlin E.L."/>
            <person name="Jedrychowski M.P."/>
            <person name="Elias J.E."/>
            <person name="Goswami T."/>
            <person name="Rad R."/>
            <person name="Beausoleil S.A."/>
            <person name="Villen J."/>
            <person name="Haas W."/>
            <person name="Sowa M.E."/>
            <person name="Gygi S.P."/>
        </authorList>
    </citation>
    <scope>IDENTIFICATION BY MASS SPECTROMETRY [LARGE SCALE ANALYSIS]</scope>
    <source>
        <tissue>Spleen</tissue>
    </source>
</reference>
<reference key="16">
    <citation type="journal article" date="2010" name="J. Immunol.">
        <title>Germinal center T follicular helper cell IL-4 production is dependent on signaling lymphocytic activation molecule receptor (CD150).</title>
        <authorList>
            <person name="Yusuf I."/>
            <person name="Kageyama R."/>
            <person name="Monticelli L."/>
            <person name="Johnston R.J."/>
            <person name="Ditoro D."/>
            <person name="Hansen K."/>
            <person name="Barnett B."/>
            <person name="Crotty S."/>
        </authorList>
    </citation>
    <scope>FUNCTION</scope>
</reference>
<reference key="17">
    <citation type="journal article" date="2010" name="Nat. Immunol.">
        <title>SLAM is a microbial sensor that regulates bacterial phagosome functions in macrophages.</title>
        <authorList>
            <person name="Berger S.B."/>
            <person name="Romero X."/>
            <person name="Ma C."/>
            <person name="Wang G."/>
            <person name="Faubion W.A."/>
            <person name="Liao G."/>
            <person name="Compeer E."/>
            <person name="Keszei M."/>
            <person name="Rameh L."/>
            <person name="Wang N."/>
            <person name="Boes M."/>
            <person name="Regueiro J.R."/>
            <person name="Reinecker H.C."/>
            <person name="Terhorst C."/>
        </authorList>
    </citation>
    <scope>FUNCTION</scope>
</reference>
<reference key="18">
    <citation type="journal article" date="2012" name="J. Biol. Chem.">
        <title>Receptor signaling lymphocyte-activation molecule family 1 (Slamf1) regulates membrane fusion and NADPH oxidase 2 (NOX2) activity by recruiting a Beclin-1/Vps34/ultraviolet radiation resistance-associated gene (UVRAG) complex.</title>
        <authorList>
            <person name="Ma C."/>
            <person name="Wang N."/>
            <person name="Detre C."/>
            <person name="Wang G."/>
            <person name="O'Keeffe M."/>
            <person name="Terhorst C."/>
        </authorList>
    </citation>
    <scope>FUNCTION</scope>
    <scope>INTERACTION WITH PIK3C3; BECN1 AND UVRAG</scope>
</reference>
<reference key="19">
    <citation type="journal article" date="2015" name="Front. Immunol.">
        <title>Negative regulation of humoral immunity due to interplay between the SLAMF1, SLAMF5, and SLAMF6 receptors.</title>
        <authorList>
            <person name="Wang N."/>
            <person name="Halibozek P.J."/>
            <person name="Yigit B."/>
            <person name="Zhao H."/>
            <person name="O'Keeffe M.S."/>
            <person name="Sage P."/>
            <person name="Sharpe A."/>
            <person name="Terhorst C."/>
        </authorList>
    </citation>
    <scope>FUNCTION</scope>
</reference>
<organism>
    <name type="scientific">Mus musculus</name>
    <name type="common">Mouse</name>
    <dbReference type="NCBI Taxonomy" id="10090"/>
    <lineage>
        <taxon>Eukaryota</taxon>
        <taxon>Metazoa</taxon>
        <taxon>Chordata</taxon>
        <taxon>Craniata</taxon>
        <taxon>Vertebrata</taxon>
        <taxon>Euteleostomi</taxon>
        <taxon>Mammalia</taxon>
        <taxon>Eutheria</taxon>
        <taxon>Euarchontoglires</taxon>
        <taxon>Glires</taxon>
        <taxon>Rodentia</taxon>
        <taxon>Myomorpha</taxon>
        <taxon>Muroidea</taxon>
        <taxon>Muridae</taxon>
        <taxon>Murinae</taxon>
        <taxon>Mus</taxon>
        <taxon>Mus</taxon>
    </lineage>
</organism>